<protein>
    <recommendedName>
        <fullName evidence="1">Sulfite reductase [NADPH] hemoprotein beta-component</fullName>
        <shortName evidence="1">SiR-HP</shortName>
        <shortName evidence="1">SiRHP</shortName>
        <ecNumber evidence="1">1.8.1.2</ecNumber>
    </recommendedName>
</protein>
<organism>
    <name type="scientific">Nitrosomonas eutropha (strain DSM 101675 / C91 / Nm57)</name>
    <dbReference type="NCBI Taxonomy" id="335283"/>
    <lineage>
        <taxon>Bacteria</taxon>
        <taxon>Pseudomonadati</taxon>
        <taxon>Pseudomonadota</taxon>
        <taxon>Betaproteobacteria</taxon>
        <taxon>Nitrosomonadales</taxon>
        <taxon>Nitrosomonadaceae</taxon>
        <taxon>Nitrosomonas</taxon>
    </lineage>
</organism>
<evidence type="ECO:0000255" key="1">
    <source>
        <dbReference type="HAMAP-Rule" id="MF_01540"/>
    </source>
</evidence>
<gene>
    <name evidence="1" type="primary">cysI</name>
    <name type="ordered locus">Neut_1184</name>
</gene>
<keyword id="KW-0004">4Fe-4S</keyword>
<keyword id="KW-0028">Amino-acid biosynthesis</keyword>
<keyword id="KW-0198">Cysteine biosynthesis</keyword>
<keyword id="KW-0349">Heme</keyword>
<keyword id="KW-0408">Iron</keyword>
<keyword id="KW-0411">Iron-sulfur</keyword>
<keyword id="KW-0479">Metal-binding</keyword>
<keyword id="KW-0521">NADP</keyword>
<keyword id="KW-0560">Oxidoreductase</keyword>
<reference key="1">
    <citation type="journal article" date="2007" name="Environ. Microbiol.">
        <title>Whole-genome analysis of the ammonia-oxidizing bacterium, Nitrosomonas eutropha C91: implications for niche adaptation.</title>
        <authorList>
            <person name="Stein L.Y."/>
            <person name="Arp D.J."/>
            <person name="Berube P.M."/>
            <person name="Chain P.S."/>
            <person name="Hauser L."/>
            <person name="Jetten M.S."/>
            <person name="Klotz M.G."/>
            <person name="Larimer F.W."/>
            <person name="Norton J.M."/>
            <person name="Op den Camp H.J.M."/>
            <person name="Shin M."/>
            <person name="Wei X."/>
        </authorList>
    </citation>
    <scope>NUCLEOTIDE SEQUENCE [LARGE SCALE GENOMIC DNA]</scope>
    <source>
        <strain>DSM 101675 / C91 / Nm57</strain>
    </source>
</reference>
<name>CYSI_NITEC</name>
<sequence length="573" mass="64208">MADTLPPTDRSCDISQPLERLSPDEALKAGSEYLRGTIALGLLDRITSAVPGDDIKLMKFHGIYQQDDRDVRDERRRQKLEPAFQFMIRVRLPGGICTTERWLKISELACAHGNETLRMTTRQTFQFHWVLKHNIVPVIRGLHEVLLDTVAACGDDSRGVMATVNPQFPALQAELAALAKTVSDHVIPKTRGYHEIWYGEERIASSEPEEPFYGRTYMPRKFKIGFVIPPNNDIDIYAQDLGYIAIAGKDGKIAGFNIAIGGGMGRTDKVPHTYPRTASVIGFITPDRLISVTEAVMGVQRDYGNRADRSRARFKYTIDDKGLDWIKLAIEDRAGLLEPARPYHFTSNADIYGWVESDDGYHHFTLFVENGRLNRDTLDKIARIAHVHKGHFRLTPNQNLMIANVATADKPKIDALLVGSGLIAFNEHSVLRLNSMACVAFPTCGLAMADSERYLPTLITKIEGILTRYNLQDEPITLRMTGCPNGCSRPFIAEIGLTGRAPGKYNLYLGGGFHGQRLNRLYRENIGEAAILEALDEVLRHYATERLPDEHFGDFTIRAGIIREVTEGRFSND</sequence>
<accession>Q0AGU3</accession>
<comment type="function">
    <text evidence="1">Component of the sulfite reductase complex that catalyzes the 6-electron reduction of sulfite to sulfide. This is one of several activities required for the biosynthesis of L-cysteine from sulfate.</text>
</comment>
<comment type="catalytic activity">
    <reaction evidence="1">
        <text>hydrogen sulfide + 3 NADP(+) + 3 H2O = sulfite + 3 NADPH + 4 H(+)</text>
        <dbReference type="Rhea" id="RHEA:13801"/>
        <dbReference type="ChEBI" id="CHEBI:15377"/>
        <dbReference type="ChEBI" id="CHEBI:15378"/>
        <dbReference type="ChEBI" id="CHEBI:17359"/>
        <dbReference type="ChEBI" id="CHEBI:29919"/>
        <dbReference type="ChEBI" id="CHEBI:57783"/>
        <dbReference type="ChEBI" id="CHEBI:58349"/>
        <dbReference type="EC" id="1.8.1.2"/>
    </reaction>
</comment>
<comment type="cofactor">
    <cofactor evidence="1">
        <name>siroheme</name>
        <dbReference type="ChEBI" id="CHEBI:60052"/>
    </cofactor>
    <text evidence="1">Binds 1 siroheme per subunit.</text>
</comment>
<comment type="cofactor">
    <cofactor evidence="1">
        <name>[4Fe-4S] cluster</name>
        <dbReference type="ChEBI" id="CHEBI:49883"/>
    </cofactor>
    <text evidence="1">Binds 1 [4Fe-4S] cluster per subunit.</text>
</comment>
<comment type="pathway">
    <text evidence="1">Sulfur metabolism; hydrogen sulfide biosynthesis; hydrogen sulfide from sulfite (NADPH route): step 1/1.</text>
</comment>
<comment type="subunit">
    <text evidence="1">Alpha(8)-beta(8). The alpha component is a flavoprotein, the beta component is a hemoprotein.</text>
</comment>
<comment type="similarity">
    <text evidence="1">Belongs to the nitrite and sulfite reductase 4Fe-4S domain family.</text>
</comment>
<feature type="chain" id="PRO_0000388506" description="Sulfite reductase [NADPH] hemoprotein beta-component">
    <location>
        <begin position="1"/>
        <end position="573"/>
    </location>
</feature>
<feature type="binding site" evidence="1">
    <location>
        <position position="438"/>
    </location>
    <ligand>
        <name>[4Fe-4S] cluster</name>
        <dbReference type="ChEBI" id="CHEBI:49883"/>
    </ligand>
</feature>
<feature type="binding site" evidence="1">
    <location>
        <position position="444"/>
    </location>
    <ligand>
        <name>[4Fe-4S] cluster</name>
        <dbReference type="ChEBI" id="CHEBI:49883"/>
    </ligand>
</feature>
<feature type="binding site" evidence="1">
    <location>
        <position position="483"/>
    </location>
    <ligand>
        <name>[4Fe-4S] cluster</name>
        <dbReference type="ChEBI" id="CHEBI:49883"/>
    </ligand>
</feature>
<feature type="binding site" evidence="1">
    <location>
        <position position="487"/>
    </location>
    <ligand>
        <name>[4Fe-4S] cluster</name>
        <dbReference type="ChEBI" id="CHEBI:49883"/>
    </ligand>
</feature>
<feature type="binding site" description="axial binding residue" evidence="1">
    <location>
        <position position="487"/>
    </location>
    <ligand>
        <name>siroheme</name>
        <dbReference type="ChEBI" id="CHEBI:60052"/>
    </ligand>
    <ligandPart>
        <name>Fe</name>
        <dbReference type="ChEBI" id="CHEBI:18248"/>
    </ligandPart>
</feature>
<proteinExistence type="inferred from homology"/>
<dbReference type="EC" id="1.8.1.2" evidence="1"/>
<dbReference type="EMBL" id="CP000450">
    <property type="protein sequence ID" value="ABI59439.1"/>
    <property type="molecule type" value="Genomic_DNA"/>
</dbReference>
<dbReference type="RefSeq" id="WP_011634259.1">
    <property type="nucleotide sequence ID" value="NC_008344.1"/>
</dbReference>
<dbReference type="SMR" id="Q0AGU3"/>
<dbReference type="STRING" id="335283.Neut_1184"/>
<dbReference type="KEGG" id="net:Neut_1184"/>
<dbReference type="eggNOG" id="COG0155">
    <property type="taxonomic scope" value="Bacteria"/>
</dbReference>
<dbReference type="HOGENOM" id="CLU_001975_3_2_4"/>
<dbReference type="OrthoDB" id="3189055at2"/>
<dbReference type="UniPathway" id="UPA00140">
    <property type="reaction ID" value="UER00207"/>
</dbReference>
<dbReference type="Proteomes" id="UP000001966">
    <property type="component" value="Chromosome"/>
</dbReference>
<dbReference type="GO" id="GO:0009337">
    <property type="term" value="C:sulfite reductase complex (NADPH)"/>
    <property type="evidence" value="ECO:0007669"/>
    <property type="project" value="InterPro"/>
</dbReference>
<dbReference type="GO" id="GO:0051539">
    <property type="term" value="F:4 iron, 4 sulfur cluster binding"/>
    <property type="evidence" value="ECO:0007669"/>
    <property type="project" value="UniProtKB-KW"/>
</dbReference>
<dbReference type="GO" id="GO:0020037">
    <property type="term" value="F:heme binding"/>
    <property type="evidence" value="ECO:0007669"/>
    <property type="project" value="InterPro"/>
</dbReference>
<dbReference type="GO" id="GO:0046872">
    <property type="term" value="F:metal ion binding"/>
    <property type="evidence" value="ECO:0007669"/>
    <property type="project" value="UniProtKB-KW"/>
</dbReference>
<dbReference type="GO" id="GO:0050661">
    <property type="term" value="F:NADP binding"/>
    <property type="evidence" value="ECO:0007669"/>
    <property type="project" value="InterPro"/>
</dbReference>
<dbReference type="GO" id="GO:0050311">
    <property type="term" value="F:sulfite reductase (ferredoxin) activity"/>
    <property type="evidence" value="ECO:0007669"/>
    <property type="project" value="TreeGrafter"/>
</dbReference>
<dbReference type="GO" id="GO:0004783">
    <property type="term" value="F:sulfite reductase (NADPH) activity"/>
    <property type="evidence" value="ECO:0007669"/>
    <property type="project" value="UniProtKB-UniRule"/>
</dbReference>
<dbReference type="GO" id="GO:0019344">
    <property type="term" value="P:cysteine biosynthetic process"/>
    <property type="evidence" value="ECO:0007669"/>
    <property type="project" value="UniProtKB-KW"/>
</dbReference>
<dbReference type="GO" id="GO:0070814">
    <property type="term" value="P:hydrogen sulfide biosynthetic process"/>
    <property type="evidence" value="ECO:0007669"/>
    <property type="project" value="UniProtKB-UniRule"/>
</dbReference>
<dbReference type="GO" id="GO:0000103">
    <property type="term" value="P:sulfate assimilation"/>
    <property type="evidence" value="ECO:0007669"/>
    <property type="project" value="UniProtKB-UniRule"/>
</dbReference>
<dbReference type="FunFam" id="3.30.413.10:FF:000003">
    <property type="entry name" value="Sulfite reductase [NADPH] hemoprotein beta-component"/>
    <property type="match status" value="1"/>
</dbReference>
<dbReference type="Gene3D" id="3.90.480.20">
    <property type="match status" value="1"/>
</dbReference>
<dbReference type="Gene3D" id="3.30.413.10">
    <property type="entry name" value="Sulfite Reductase Hemoprotein, domain 1"/>
    <property type="match status" value="2"/>
</dbReference>
<dbReference type="Gene3D" id="3.90.480.10">
    <property type="entry name" value="Sulfite Reductase Hemoprotein,Domain 2"/>
    <property type="match status" value="1"/>
</dbReference>
<dbReference type="HAMAP" id="MF_01540">
    <property type="entry name" value="CysI"/>
    <property type="match status" value="1"/>
</dbReference>
<dbReference type="InterPro" id="IPR011786">
    <property type="entry name" value="CysI"/>
</dbReference>
<dbReference type="InterPro" id="IPR005117">
    <property type="entry name" value="NiRdtase/SiRdtase_haem-b_fer"/>
</dbReference>
<dbReference type="InterPro" id="IPR036136">
    <property type="entry name" value="Nit/Sulf_reduc_fer-like_dom_sf"/>
</dbReference>
<dbReference type="InterPro" id="IPR006067">
    <property type="entry name" value="NO2/SO3_Rdtase_4Fe4S_dom"/>
</dbReference>
<dbReference type="InterPro" id="IPR045169">
    <property type="entry name" value="NO2/SO3_Rdtase_4Fe4S_prot"/>
</dbReference>
<dbReference type="InterPro" id="IPR045854">
    <property type="entry name" value="NO2/SO3_Rdtase_4Fe4S_sf"/>
</dbReference>
<dbReference type="InterPro" id="IPR006066">
    <property type="entry name" value="NO2/SO3_Rdtase_FeS/sirohaem_BS"/>
</dbReference>
<dbReference type="NCBIfam" id="NF010029">
    <property type="entry name" value="PRK13504.1"/>
    <property type="match status" value="1"/>
</dbReference>
<dbReference type="PANTHER" id="PTHR11493:SF47">
    <property type="entry name" value="SULFITE REDUCTASE [NADPH] SUBUNIT BETA"/>
    <property type="match status" value="1"/>
</dbReference>
<dbReference type="PANTHER" id="PTHR11493">
    <property type="entry name" value="SULFITE REDUCTASE [NADPH] SUBUNIT BETA-RELATED"/>
    <property type="match status" value="1"/>
</dbReference>
<dbReference type="Pfam" id="PF01077">
    <property type="entry name" value="NIR_SIR"/>
    <property type="match status" value="1"/>
</dbReference>
<dbReference type="Pfam" id="PF03460">
    <property type="entry name" value="NIR_SIR_ferr"/>
    <property type="match status" value="2"/>
</dbReference>
<dbReference type="PRINTS" id="PR00397">
    <property type="entry name" value="SIROHAEM"/>
</dbReference>
<dbReference type="SUPFAM" id="SSF56014">
    <property type="entry name" value="Nitrite and sulphite reductase 4Fe-4S domain-like"/>
    <property type="match status" value="2"/>
</dbReference>
<dbReference type="SUPFAM" id="SSF55124">
    <property type="entry name" value="Nitrite/Sulfite reductase N-terminal domain-like"/>
    <property type="match status" value="2"/>
</dbReference>
<dbReference type="PROSITE" id="PS00365">
    <property type="entry name" value="NIR_SIR"/>
    <property type="match status" value="1"/>
</dbReference>